<reference key="1">
    <citation type="journal article" date="2009" name="PLoS Genet.">
        <title>Organised genome dynamics in the Escherichia coli species results in highly diverse adaptive paths.</title>
        <authorList>
            <person name="Touchon M."/>
            <person name="Hoede C."/>
            <person name="Tenaillon O."/>
            <person name="Barbe V."/>
            <person name="Baeriswyl S."/>
            <person name="Bidet P."/>
            <person name="Bingen E."/>
            <person name="Bonacorsi S."/>
            <person name="Bouchier C."/>
            <person name="Bouvet O."/>
            <person name="Calteau A."/>
            <person name="Chiapello H."/>
            <person name="Clermont O."/>
            <person name="Cruveiller S."/>
            <person name="Danchin A."/>
            <person name="Diard M."/>
            <person name="Dossat C."/>
            <person name="Karoui M.E."/>
            <person name="Frapy E."/>
            <person name="Garry L."/>
            <person name="Ghigo J.M."/>
            <person name="Gilles A.M."/>
            <person name="Johnson J."/>
            <person name="Le Bouguenec C."/>
            <person name="Lescat M."/>
            <person name="Mangenot S."/>
            <person name="Martinez-Jehanne V."/>
            <person name="Matic I."/>
            <person name="Nassif X."/>
            <person name="Oztas S."/>
            <person name="Petit M.A."/>
            <person name="Pichon C."/>
            <person name="Rouy Z."/>
            <person name="Ruf C.S."/>
            <person name="Schneider D."/>
            <person name="Tourret J."/>
            <person name="Vacherie B."/>
            <person name="Vallenet D."/>
            <person name="Medigue C."/>
            <person name="Rocha E.P.C."/>
            <person name="Denamur E."/>
        </authorList>
    </citation>
    <scope>NUCLEOTIDE SEQUENCE [LARGE SCALE GENOMIC DNA]</scope>
    <source>
        <strain>IAI39 / ExPEC</strain>
    </source>
</reference>
<dbReference type="EMBL" id="CU928164">
    <property type="protein sequence ID" value="CAR19762.1"/>
    <property type="molecule type" value="Genomic_DNA"/>
</dbReference>
<dbReference type="RefSeq" id="WP_001158035.1">
    <property type="nucleotide sequence ID" value="NC_011750.1"/>
</dbReference>
<dbReference type="RefSeq" id="YP_002409549.1">
    <property type="nucleotide sequence ID" value="NC_011750.1"/>
</dbReference>
<dbReference type="SMR" id="B7NKL8"/>
<dbReference type="STRING" id="585057.ECIAI39_3646"/>
<dbReference type="GeneID" id="75206004"/>
<dbReference type="KEGG" id="ect:ECIAI39_3646"/>
<dbReference type="PATRIC" id="fig|585057.6.peg.3779"/>
<dbReference type="HOGENOM" id="CLU_080999_3_1_6"/>
<dbReference type="Proteomes" id="UP000000749">
    <property type="component" value="Chromosome"/>
</dbReference>
<dbReference type="GO" id="GO:0097367">
    <property type="term" value="F:carbohydrate derivative binding"/>
    <property type="evidence" value="ECO:0007669"/>
    <property type="project" value="InterPro"/>
</dbReference>
<dbReference type="GO" id="GO:1901135">
    <property type="term" value="P:carbohydrate derivative metabolic process"/>
    <property type="evidence" value="ECO:0007669"/>
    <property type="project" value="InterPro"/>
</dbReference>
<dbReference type="GO" id="GO:0006260">
    <property type="term" value="P:DNA replication"/>
    <property type="evidence" value="ECO:0007669"/>
    <property type="project" value="UniProtKB-UniRule"/>
</dbReference>
<dbReference type="CDD" id="cd05006">
    <property type="entry name" value="SIS_GmhA"/>
    <property type="match status" value="1"/>
</dbReference>
<dbReference type="FunFam" id="3.40.50.10490:FF:000006">
    <property type="entry name" value="DnaA initiator-associating protein DiaA"/>
    <property type="match status" value="1"/>
</dbReference>
<dbReference type="Gene3D" id="3.40.50.10490">
    <property type="entry name" value="Glucose-6-phosphate isomerase like protein, domain 1"/>
    <property type="match status" value="1"/>
</dbReference>
<dbReference type="HAMAP" id="MF_01157">
    <property type="entry name" value="SIS_DiaA"/>
    <property type="match status" value="1"/>
</dbReference>
<dbReference type="InterPro" id="IPR023070">
    <property type="entry name" value="DiaA"/>
</dbReference>
<dbReference type="InterPro" id="IPR035461">
    <property type="entry name" value="GmhA/DiaA"/>
</dbReference>
<dbReference type="InterPro" id="IPR001347">
    <property type="entry name" value="SIS_dom"/>
</dbReference>
<dbReference type="InterPro" id="IPR046348">
    <property type="entry name" value="SIS_dom_sf"/>
</dbReference>
<dbReference type="InterPro" id="IPR050099">
    <property type="entry name" value="SIS_GmhA/DiaA_subfam"/>
</dbReference>
<dbReference type="NCBIfam" id="NF008138">
    <property type="entry name" value="PRK10886.1"/>
    <property type="match status" value="1"/>
</dbReference>
<dbReference type="NCBIfam" id="NF010546">
    <property type="entry name" value="PRK13936.1"/>
    <property type="match status" value="1"/>
</dbReference>
<dbReference type="PANTHER" id="PTHR30390:SF6">
    <property type="entry name" value="DNAA INITIATOR-ASSOCIATING PROTEIN DIAA"/>
    <property type="match status" value="1"/>
</dbReference>
<dbReference type="PANTHER" id="PTHR30390">
    <property type="entry name" value="SEDOHEPTULOSE 7-PHOSPHATE ISOMERASE / DNAA INITIATOR-ASSOCIATING FACTOR FOR REPLICATION INITIATION"/>
    <property type="match status" value="1"/>
</dbReference>
<dbReference type="Pfam" id="PF13580">
    <property type="entry name" value="SIS_2"/>
    <property type="match status" value="1"/>
</dbReference>
<dbReference type="SUPFAM" id="SSF53697">
    <property type="entry name" value="SIS domain"/>
    <property type="match status" value="1"/>
</dbReference>
<dbReference type="PROSITE" id="PS51464">
    <property type="entry name" value="SIS"/>
    <property type="match status" value="1"/>
</dbReference>
<name>DIAA_ECO7I</name>
<protein>
    <recommendedName>
        <fullName evidence="1">DnaA initiator-associating protein DiaA</fullName>
    </recommendedName>
</protein>
<proteinExistence type="inferred from homology"/>
<keyword id="KW-0235">DNA replication</keyword>
<sequence>MQERIKACFTESIQTQIAAAEALPDAISRAAMTLVQSLLNGNKILCCGNGTSAANAQHFAASMINRFETERPSLPAIALNTDNVVLTAIANDRLHDEVYAKQVRALGHAGDVLLAISTRGNSRDIVKAVEAAVTRDMTIVALTGYDGGELAGLLGPQDVEIRIPSHRSARIQEMHMLTVNCLCDLIDNTLFPHQDV</sequence>
<gene>
    <name evidence="1" type="primary">diaA</name>
    <name type="ordered locus">ECIAI39_3646</name>
</gene>
<accession>B7NKL8</accession>
<feature type="chain" id="PRO_1000137786" description="DnaA initiator-associating protein DiaA">
    <location>
        <begin position="1"/>
        <end position="196"/>
    </location>
</feature>
<feature type="domain" description="SIS" evidence="1">
    <location>
        <begin position="34"/>
        <end position="196"/>
    </location>
</feature>
<evidence type="ECO:0000255" key="1">
    <source>
        <dbReference type="HAMAP-Rule" id="MF_01157"/>
    </source>
</evidence>
<organism>
    <name type="scientific">Escherichia coli O7:K1 (strain IAI39 / ExPEC)</name>
    <dbReference type="NCBI Taxonomy" id="585057"/>
    <lineage>
        <taxon>Bacteria</taxon>
        <taxon>Pseudomonadati</taxon>
        <taxon>Pseudomonadota</taxon>
        <taxon>Gammaproteobacteria</taxon>
        <taxon>Enterobacterales</taxon>
        <taxon>Enterobacteriaceae</taxon>
        <taxon>Escherichia</taxon>
    </lineage>
</organism>
<comment type="function">
    <text evidence="1">Required for the timely initiation of chromosomal replication via direct interactions with the DnaA initiator protein.</text>
</comment>
<comment type="subunit">
    <text evidence="1">Homotetramer; dimer of dimers.</text>
</comment>
<comment type="similarity">
    <text evidence="1">Belongs to the SIS family. DiaA subfamily.</text>
</comment>